<accession>Q83F67</accession>
<reference key="1">
    <citation type="journal article" date="2003" name="Proc. Natl. Acad. Sci. U.S.A.">
        <title>Complete genome sequence of the Q-fever pathogen, Coxiella burnetii.</title>
        <authorList>
            <person name="Seshadri R."/>
            <person name="Paulsen I.T."/>
            <person name="Eisen J.A."/>
            <person name="Read T.D."/>
            <person name="Nelson K.E."/>
            <person name="Nelson W.C."/>
            <person name="Ward N.L."/>
            <person name="Tettelin H."/>
            <person name="Davidsen T.M."/>
            <person name="Beanan M.J."/>
            <person name="DeBoy R.T."/>
            <person name="Daugherty S.C."/>
            <person name="Brinkac L.M."/>
            <person name="Madupu R."/>
            <person name="Dodson R.J."/>
            <person name="Khouri H.M."/>
            <person name="Lee K.H."/>
            <person name="Carty H.A."/>
            <person name="Scanlan D."/>
            <person name="Heinzen R.A."/>
            <person name="Thompson H.A."/>
            <person name="Samuel J.E."/>
            <person name="Fraser C.M."/>
            <person name="Heidelberg J.F."/>
        </authorList>
    </citation>
    <scope>NUCLEOTIDE SEQUENCE [LARGE SCALE GENOMIC DNA]</scope>
    <source>
        <strain>RSA 493 / Nine Mile phase I</strain>
    </source>
</reference>
<feature type="chain" id="PRO_0000248680" description="Proline--tRNA ligase">
    <location>
        <begin position="1"/>
        <end position="566"/>
    </location>
</feature>
<keyword id="KW-0030">Aminoacyl-tRNA synthetase</keyword>
<keyword id="KW-0067">ATP-binding</keyword>
<keyword id="KW-0963">Cytoplasm</keyword>
<keyword id="KW-0436">Ligase</keyword>
<keyword id="KW-0547">Nucleotide-binding</keyword>
<keyword id="KW-0648">Protein biosynthesis</keyword>
<keyword id="KW-1185">Reference proteome</keyword>
<gene>
    <name evidence="1" type="primary">proS</name>
    <name type="ordered locus">CBU_0081</name>
</gene>
<protein>
    <recommendedName>
        <fullName evidence="1">Proline--tRNA ligase</fullName>
        <ecNumber evidence="1">6.1.1.15</ecNumber>
    </recommendedName>
    <alternativeName>
        <fullName evidence="1">Prolyl-tRNA synthetase</fullName>
        <shortName evidence="1">ProRS</shortName>
    </alternativeName>
</protein>
<comment type="function">
    <text evidence="1">Catalyzes the attachment of proline to tRNA(Pro) in a two-step reaction: proline is first activated by ATP to form Pro-AMP and then transferred to the acceptor end of tRNA(Pro). As ProRS can inadvertently accommodate and process non-cognate amino acids such as alanine and cysteine, to avoid such errors it has two additional distinct editing activities against alanine. One activity is designated as 'pretransfer' editing and involves the tRNA(Pro)-independent hydrolysis of activated Ala-AMP. The other activity is designated 'posttransfer' editing and involves deacylation of mischarged Ala-tRNA(Pro). The misacylated Cys-tRNA(Pro) is not edited by ProRS.</text>
</comment>
<comment type="catalytic activity">
    <reaction evidence="1">
        <text>tRNA(Pro) + L-proline + ATP = L-prolyl-tRNA(Pro) + AMP + diphosphate</text>
        <dbReference type="Rhea" id="RHEA:14305"/>
        <dbReference type="Rhea" id="RHEA-COMP:9700"/>
        <dbReference type="Rhea" id="RHEA-COMP:9702"/>
        <dbReference type="ChEBI" id="CHEBI:30616"/>
        <dbReference type="ChEBI" id="CHEBI:33019"/>
        <dbReference type="ChEBI" id="CHEBI:60039"/>
        <dbReference type="ChEBI" id="CHEBI:78442"/>
        <dbReference type="ChEBI" id="CHEBI:78532"/>
        <dbReference type="ChEBI" id="CHEBI:456215"/>
        <dbReference type="EC" id="6.1.1.15"/>
    </reaction>
</comment>
<comment type="subunit">
    <text evidence="1">Homodimer.</text>
</comment>
<comment type="subcellular location">
    <subcellularLocation>
        <location evidence="1">Cytoplasm</location>
    </subcellularLocation>
</comment>
<comment type="domain">
    <text evidence="1">Consists of three domains: the N-terminal catalytic domain, the editing domain and the C-terminal anticodon-binding domain.</text>
</comment>
<comment type="similarity">
    <text evidence="1">Belongs to the class-II aminoacyl-tRNA synthetase family. ProS type 1 subfamily.</text>
</comment>
<evidence type="ECO:0000255" key="1">
    <source>
        <dbReference type="HAMAP-Rule" id="MF_01569"/>
    </source>
</evidence>
<organism>
    <name type="scientific">Coxiella burnetii (strain RSA 493 / Nine Mile phase I)</name>
    <dbReference type="NCBI Taxonomy" id="227377"/>
    <lineage>
        <taxon>Bacteria</taxon>
        <taxon>Pseudomonadati</taxon>
        <taxon>Pseudomonadota</taxon>
        <taxon>Gammaproteobacteria</taxon>
        <taxon>Legionellales</taxon>
        <taxon>Coxiellaceae</taxon>
        <taxon>Coxiella</taxon>
    </lineage>
</organism>
<name>SYP_COXBU</name>
<dbReference type="EC" id="6.1.1.15" evidence="1"/>
<dbReference type="EMBL" id="AE016828">
    <property type="protein sequence ID" value="AAO89648.1"/>
    <property type="molecule type" value="Genomic_DNA"/>
</dbReference>
<dbReference type="RefSeq" id="NP_819134.1">
    <property type="nucleotide sequence ID" value="NC_002971.4"/>
</dbReference>
<dbReference type="RefSeq" id="WP_010957364.1">
    <property type="nucleotide sequence ID" value="NC_002971.4"/>
</dbReference>
<dbReference type="SMR" id="Q83F67"/>
<dbReference type="STRING" id="227377.CBU_0081"/>
<dbReference type="DNASU" id="1207951"/>
<dbReference type="EnsemblBacteria" id="AAO89648">
    <property type="protein sequence ID" value="AAO89648"/>
    <property type="gene ID" value="CBU_0081"/>
</dbReference>
<dbReference type="GeneID" id="1207951"/>
<dbReference type="KEGG" id="cbu:CBU_0081"/>
<dbReference type="PATRIC" id="fig|227377.7.peg.83"/>
<dbReference type="eggNOG" id="COG0442">
    <property type="taxonomic scope" value="Bacteria"/>
</dbReference>
<dbReference type="HOGENOM" id="CLU_016739_0_0_6"/>
<dbReference type="OrthoDB" id="9809052at2"/>
<dbReference type="Proteomes" id="UP000002671">
    <property type="component" value="Chromosome"/>
</dbReference>
<dbReference type="GO" id="GO:0005829">
    <property type="term" value="C:cytosol"/>
    <property type="evidence" value="ECO:0000318"/>
    <property type="project" value="GO_Central"/>
</dbReference>
<dbReference type="GO" id="GO:0002161">
    <property type="term" value="F:aminoacyl-tRNA deacylase activity"/>
    <property type="evidence" value="ECO:0007669"/>
    <property type="project" value="InterPro"/>
</dbReference>
<dbReference type="GO" id="GO:0005524">
    <property type="term" value="F:ATP binding"/>
    <property type="evidence" value="ECO:0007669"/>
    <property type="project" value="UniProtKB-UniRule"/>
</dbReference>
<dbReference type="GO" id="GO:0004827">
    <property type="term" value="F:proline-tRNA ligase activity"/>
    <property type="evidence" value="ECO:0000318"/>
    <property type="project" value="GO_Central"/>
</dbReference>
<dbReference type="GO" id="GO:0006433">
    <property type="term" value="P:prolyl-tRNA aminoacylation"/>
    <property type="evidence" value="ECO:0000318"/>
    <property type="project" value="GO_Central"/>
</dbReference>
<dbReference type="CDD" id="cd04334">
    <property type="entry name" value="ProRS-INS"/>
    <property type="match status" value="1"/>
</dbReference>
<dbReference type="CDD" id="cd00861">
    <property type="entry name" value="ProRS_anticodon_short"/>
    <property type="match status" value="1"/>
</dbReference>
<dbReference type="CDD" id="cd00779">
    <property type="entry name" value="ProRS_core_prok"/>
    <property type="match status" value="1"/>
</dbReference>
<dbReference type="FunFam" id="3.30.930.10:FF:000043">
    <property type="entry name" value="Proline--tRNA ligase"/>
    <property type="match status" value="1"/>
</dbReference>
<dbReference type="FunFam" id="3.40.50.800:FF:000006">
    <property type="entry name" value="Proline--tRNA ligase"/>
    <property type="match status" value="1"/>
</dbReference>
<dbReference type="FunFam" id="3.90.960.10:FF:000001">
    <property type="entry name" value="Proline--tRNA ligase"/>
    <property type="match status" value="1"/>
</dbReference>
<dbReference type="Gene3D" id="3.40.50.800">
    <property type="entry name" value="Anticodon-binding domain"/>
    <property type="match status" value="1"/>
</dbReference>
<dbReference type="Gene3D" id="3.30.930.10">
    <property type="entry name" value="Bira Bifunctional Protein, Domain 2"/>
    <property type="match status" value="2"/>
</dbReference>
<dbReference type="Gene3D" id="3.90.960.10">
    <property type="entry name" value="YbaK/aminoacyl-tRNA synthetase-associated domain"/>
    <property type="match status" value="1"/>
</dbReference>
<dbReference type="HAMAP" id="MF_01569">
    <property type="entry name" value="Pro_tRNA_synth_type1"/>
    <property type="match status" value="1"/>
</dbReference>
<dbReference type="InterPro" id="IPR002314">
    <property type="entry name" value="aa-tRNA-synt_IIb"/>
</dbReference>
<dbReference type="InterPro" id="IPR006195">
    <property type="entry name" value="aa-tRNA-synth_II"/>
</dbReference>
<dbReference type="InterPro" id="IPR045864">
    <property type="entry name" value="aa-tRNA-synth_II/BPL/LPL"/>
</dbReference>
<dbReference type="InterPro" id="IPR004154">
    <property type="entry name" value="Anticodon-bd"/>
</dbReference>
<dbReference type="InterPro" id="IPR036621">
    <property type="entry name" value="Anticodon-bd_dom_sf"/>
</dbReference>
<dbReference type="InterPro" id="IPR002316">
    <property type="entry name" value="Pro-tRNA-ligase_IIa"/>
</dbReference>
<dbReference type="InterPro" id="IPR004500">
    <property type="entry name" value="Pro-tRNA-synth_IIa_bac-type"/>
</dbReference>
<dbReference type="InterPro" id="IPR023717">
    <property type="entry name" value="Pro-tRNA-Synthase_IIa_type1"/>
</dbReference>
<dbReference type="InterPro" id="IPR050062">
    <property type="entry name" value="Pro-tRNA_synthetase"/>
</dbReference>
<dbReference type="InterPro" id="IPR044140">
    <property type="entry name" value="ProRS_anticodon_short"/>
</dbReference>
<dbReference type="InterPro" id="IPR033730">
    <property type="entry name" value="ProRS_core_prok"/>
</dbReference>
<dbReference type="InterPro" id="IPR036754">
    <property type="entry name" value="YbaK/aa-tRNA-synt-asso_dom_sf"/>
</dbReference>
<dbReference type="InterPro" id="IPR007214">
    <property type="entry name" value="YbaK/aa-tRNA-synth-assoc-dom"/>
</dbReference>
<dbReference type="NCBIfam" id="NF006625">
    <property type="entry name" value="PRK09194.1"/>
    <property type="match status" value="1"/>
</dbReference>
<dbReference type="NCBIfam" id="TIGR00409">
    <property type="entry name" value="proS_fam_II"/>
    <property type="match status" value="1"/>
</dbReference>
<dbReference type="PANTHER" id="PTHR42753">
    <property type="entry name" value="MITOCHONDRIAL RIBOSOME PROTEIN L39/PROLYL-TRNA LIGASE FAMILY MEMBER"/>
    <property type="match status" value="1"/>
</dbReference>
<dbReference type="PANTHER" id="PTHR42753:SF2">
    <property type="entry name" value="PROLINE--TRNA LIGASE"/>
    <property type="match status" value="1"/>
</dbReference>
<dbReference type="Pfam" id="PF03129">
    <property type="entry name" value="HGTP_anticodon"/>
    <property type="match status" value="1"/>
</dbReference>
<dbReference type="Pfam" id="PF00587">
    <property type="entry name" value="tRNA-synt_2b"/>
    <property type="match status" value="1"/>
</dbReference>
<dbReference type="Pfam" id="PF04073">
    <property type="entry name" value="tRNA_edit"/>
    <property type="match status" value="1"/>
</dbReference>
<dbReference type="PIRSF" id="PIRSF001535">
    <property type="entry name" value="ProRS_1"/>
    <property type="match status" value="1"/>
</dbReference>
<dbReference type="PRINTS" id="PR01046">
    <property type="entry name" value="TRNASYNTHPRO"/>
</dbReference>
<dbReference type="SUPFAM" id="SSF52954">
    <property type="entry name" value="Class II aaRS ABD-related"/>
    <property type="match status" value="1"/>
</dbReference>
<dbReference type="SUPFAM" id="SSF55681">
    <property type="entry name" value="Class II aaRS and biotin synthetases"/>
    <property type="match status" value="1"/>
</dbReference>
<dbReference type="SUPFAM" id="SSF55826">
    <property type="entry name" value="YbaK/ProRS associated domain"/>
    <property type="match status" value="1"/>
</dbReference>
<dbReference type="PROSITE" id="PS50862">
    <property type="entry name" value="AA_TRNA_LIGASE_II"/>
    <property type="match status" value="1"/>
</dbReference>
<proteinExistence type="inferred from homology"/>
<sequence>MLMKVSQFFLATVKETPADAVLASHQLMIRAGMLRKLASGLYTWLPLGLRVLQKVADVVREEMNRAGALELLMPIVQPASLWQESGRWEAYGAELLRIMDRHQNGFCFGPTHEEVITDIARQELKSYKQLPLNFYQIQTKFRDEIRPRFGVMRSREFLMKDAYSFDLDEKGMQAAYEKMFDAYRRIFTRLGLNFRAVLADTGAIGGDYSHEFQVLADVGEDTVVYSDESDYAANIEKAAAQAPQGERVKPVAEMKKIATPGVRTIKQLADKANILPEKGVKTLIVKGDESSLIALILRGDHELNDVKAQHLPGVAFPLQFADEKEIREAIGCGPGSLGPVNLPIPFIVDRDAAQLVDFSCGANEDDFHWINVNWERDVPLGSVADIRKVVEGDISPDGKGRLRFARGIEVGQVFQLGDKYSRKMNATVVDELGKSRYLQMGCYGIGVSRTVAAAIEQNHDERGIIWPMPMAPFFIALVPVNMHKSYRVREACEKLYNELIDAGYEVLWDDRKERPGVMFADMDLIGIPHRLVISESGLDRGIVEYKARKSKEAENVSLENVLSVFR</sequence>